<organism>
    <name type="scientific">Arabidopsis thaliana</name>
    <name type="common">Mouse-ear cress</name>
    <dbReference type="NCBI Taxonomy" id="3702"/>
    <lineage>
        <taxon>Eukaryota</taxon>
        <taxon>Viridiplantae</taxon>
        <taxon>Streptophyta</taxon>
        <taxon>Embryophyta</taxon>
        <taxon>Tracheophyta</taxon>
        <taxon>Spermatophyta</taxon>
        <taxon>Magnoliopsida</taxon>
        <taxon>eudicotyledons</taxon>
        <taxon>Gunneridae</taxon>
        <taxon>Pentapetalae</taxon>
        <taxon>rosids</taxon>
        <taxon>malvids</taxon>
        <taxon>Brassicales</taxon>
        <taxon>Brassicaceae</taxon>
        <taxon>Camelineae</taxon>
        <taxon>Arabidopsis</taxon>
    </lineage>
</organism>
<keyword id="KW-0106">Calcium</keyword>
<keyword id="KW-0965">Cell junction</keyword>
<keyword id="KW-1003">Cell membrane</keyword>
<keyword id="KW-0963">Cytoplasm</keyword>
<keyword id="KW-0217">Developmental protein</keyword>
<keyword id="KW-0333">Golgi apparatus</keyword>
<keyword id="KW-0472">Membrane</keyword>
<keyword id="KW-0479">Metal-binding</keyword>
<keyword id="KW-1185">Reference proteome</keyword>
<keyword id="KW-0677">Repeat</keyword>
<keyword id="KW-0812">Transmembrane</keyword>
<keyword id="KW-1133">Transmembrane helix</keyword>
<gene>
    <name evidence="9" type="primary">QKY</name>
    <name evidence="11" type="synonym">MCTP15</name>
    <name evidence="13" type="ordered locus">At1g74720</name>
    <name evidence="15" type="ORF">F1M20.40</name>
    <name evidence="14" type="ORF">F25A4.30</name>
</gene>
<accession>B8XCH5</accession>
<accession>Q0WLK0</accession>
<accession>Q9CA47</accession>
<accession>Q9SSF7</accession>
<proteinExistence type="evidence at protein level"/>
<comment type="function">
    <text evidence="5 6 7 10 11">May be involved in Ca 2(+)-dependent signaling and membrane trafficking. Plays a role in fruit dehiscence (Probable). Components of the machinery involved in organ development mediated by the receptor-like kinase STRUBBELIG (SUB) (PubMed:19180193, PubMed:20298225). Collaboratively with SUB and POQ, regulates cell growth anisotropy during gynoecium development, thus linking together cell-cell communication and cellular growth (PubMed:24173806). Together with SUB/SCM, links RLK-dependent signal transduction and intercellular communication mediated by plasmodesmata (PD) to regulate tissue morphogenesis (PubMed:25256344). May function as a signaling molecule by regulating the trafficking of other regulators (PubMed:29259105).</text>
</comment>
<comment type="cofactor">
    <cofactor evidence="1">
        <name>Ca(2+)</name>
        <dbReference type="ChEBI" id="CHEBI:29108"/>
    </cofactor>
    <text evidence="1">Binds Ca(2+) via the C2 domains in absence of phospholipids.</text>
</comment>
<comment type="subunit">
    <text evidence="6 7">Interacts with SUB/SCM and POQ at the plasma membrane (PubMed:24173806). Binds to SUB/SCM at plasmodesmata (PD) in root epidermal cells to promote tissue morphogenesis (PubMed:25256344).</text>
</comment>
<comment type="subcellular location">
    <subcellularLocation>
        <location evidence="6 8">Cell membrane</location>
        <topology evidence="2">Multi-pass membrane protein</topology>
    </subcellularLocation>
    <subcellularLocation>
        <location evidence="8">Cytoplasm</location>
    </subcellularLocation>
    <subcellularLocation>
        <location evidence="8">Golgi apparatus membrane</location>
        <topology evidence="2">Multi-pass membrane protein</topology>
    </subcellularLocation>
    <subcellularLocation>
        <location evidence="7">Cell junction</location>
        <location evidence="7">Plasmodesma</location>
    </subcellularLocation>
</comment>
<comment type="tissue specificity">
    <text evidence="6 8">Observed mainly in flowers, and, to a lower extent, in seedlings, roots, shoots, leaves, stems and inflorescences (PubMed:24173806, PubMed:29259105). Expressed in the vascular tissues of roots, cotyledons and rosette leaves (PubMed:29259105). Accumulates in roots meristems (PubMed:29259105).</text>
</comment>
<comment type="developmental stage">
    <text evidence="6 7 8">First observed at the tip of rosette leaves (PubMed:24173806). Present in developing flowers (PubMed:29259105). Accumulates in inflorescence apices and broadly in floral meristems and flowers (PubMed:25256344). Expressed throughout young ovules (PubMed:25256344).</text>
</comment>
<comment type="disruption phenotype">
    <text evidence="5 6">STRUBBELIG-like (sub-like) mutant (SLM) phenotype characterized by defects in outer integument development, floral organ shape, and stem twisting, as well as cellular defects in the floral meristem and in root hair patterning (PubMed:19180193). Alterated pistil morphogenesis, such as twisting of the gynoecium, as a result of abnormal division patterns and anisotropic growth of clustered epidermal valve cells arranged sporadically along the gynoecium, phenotypes associated with disorganised cortical microtubule (CMT) networks; twisting of organsm is strongly reduced by a concomitant mutation in BOTERO (PubMed:24173806). Double mutants sub/scm qky and qky poq have a stronger pistil twisting than single mutants (PubMed:24173806). The triple mutant qky sub/scm poq has a dramatic pistil twisting phenotype due to defects of valve cell growth anisotropy (PubMed:24173806).</text>
</comment>
<comment type="similarity">
    <text evidence="12">Belongs to the MCTP family.</text>
</comment>
<comment type="sequence caution" evidence="12">
    <conflict type="erroneous gene model prediction">
        <sequence resource="EMBL-CDS" id="AAD55273"/>
    </conflict>
</comment>
<comment type="sequence caution" evidence="12">
    <conflict type="erroneous gene model prediction">
        <sequence resource="EMBL-CDS" id="AAG52366"/>
    </conflict>
</comment>
<feature type="chain" id="PRO_0000432550" description="Protein QUIRKY">
    <location>
        <begin position="1"/>
        <end position="1081"/>
    </location>
</feature>
<feature type="transmembrane region" description="Helical; Name=1" evidence="2">
    <location>
        <begin position="879"/>
        <end position="899"/>
    </location>
</feature>
<feature type="transmembrane region" description="Helical; Name=2" evidence="2">
    <location>
        <begin position="916"/>
        <end position="936"/>
    </location>
</feature>
<feature type="transmembrane region" description="Helical; Name=3" evidence="2">
    <location>
        <begin position="1024"/>
        <end position="1044"/>
    </location>
</feature>
<feature type="domain" description="C2 1" evidence="3">
    <location>
        <begin position="1"/>
        <end position="124"/>
    </location>
</feature>
<feature type="domain" description="C2 2" evidence="3">
    <location>
        <begin position="318"/>
        <end position="440"/>
    </location>
</feature>
<feature type="domain" description="C2 3" evidence="3">
    <location>
        <begin position="477"/>
        <end position="605"/>
    </location>
</feature>
<feature type="domain" description="C2 4" evidence="3">
    <location>
        <begin position="652"/>
        <end position="778"/>
    </location>
</feature>
<feature type="region of interest" description="Disordered" evidence="4">
    <location>
        <begin position="154"/>
        <end position="198"/>
    </location>
</feature>
<feature type="region of interest" description="Disordered" evidence="4">
    <location>
        <begin position="238"/>
        <end position="323"/>
    </location>
</feature>
<feature type="compositionally biased region" description="Low complexity" evidence="4">
    <location>
        <begin position="163"/>
        <end position="176"/>
    </location>
</feature>
<feature type="compositionally biased region" description="Basic and acidic residues" evidence="4">
    <location>
        <begin position="248"/>
        <end position="257"/>
    </location>
</feature>
<feature type="compositionally biased region" description="Pro residues" evidence="4">
    <location>
        <begin position="258"/>
        <end position="268"/>
    </location>
</feature>
<feature type="binding site" evidence="3">
    <location>
        <position position="351"/>
    </location>
    <ligand>
        <name>Ca(2+)</name>
        <dbReference type="ChEBI" id="CHEBI:29108"/>
        <label>1</label>
    </ligand>
</feature>
<feature type="binding site" evidence="3">
    <location>
        <position position="351"/>
    </location>
    <ligand>
        <name>Ca(2+)</name>
        <dbReference type="ChEBI" id="CHEBI:29108"/>
        <label>2</label>
    </ligand>
</feature>
<feature type="binding site" evidence="3">
    <location>
        <position position="352"/>
    </location>
    <ligand>
        <name>Ca(2+)</name>
        <dbReference type="ChEBI" id="CHEBI:29108"/>
        <label>1</label>
    </ligand>
</feature>
<feature type="binding site" evidence="3">
    <location>
        <position position="408"/>
    </location>
    <ligand>
        <name>Ca(2+)</name>
        <dbReference type="ChEBI" id="CHEBI:29108"/>
        <label>1</label>
    </ligand>
</feature>
<feature type="binding site" evidence="3">
    <location>
        <position position="408"/>
    </location>
    <ligand>
        <name>Ca(2+)</name>
        <dbReference type="ChEBI" id="CHEBI:29108"/>
        <label>2</label>
    </ligand>
</feature>
<feature type="binding site" evidence="3">
    <location>
        <position position="413"/>
    </location>
    <ligand>
        <name>Ca(2+)</name>
        <dbReference type="ChEBI" id="CHEBI:29108"/>
        <label>2</label>
    </ligand>
</feature>
<feature type="sequence conflict" description="In Ref. 4; BAF02007." evidence="12" ref="4">
    <original>V</original>
    <variation>E</variation>
    <location>
        <position position="652"/>
    </location>
</feature>
<name>QKY_ARATH</name>
<reference key="1">
    <citation type="journal article" date="2009" name="PLoS Genet.">
        <title>DETORQUEO, QUIRKY, and ZERZAUST represent novel components involved in organ development mediated by the receptor-like kinase STRUBBELIG in Arabidopsis thaliana.</title>
        <authorList>
            <person name="Fulton L."/>
            <person name="Batoux M."/>
            <person name="Vaddepalli P."/>
            <person name="Yadav R.K."/>
            <person name="Busch W."/>
            <person name="Andersen S.U."/>
            <person name="Jeong S."/>
            <person name="Lohmann J.U."/>
            <person name="Schneitz K."/>
        </authorList>
    </citation>
    <scope>NUCLEOTIDE SEQUENCE [MRNA]</scope>
    <scope>FUNCTION</scope>
    <scope>DISRUPTION PHENOTYPE</scope>
    <source>
        <strain>cv. Landsberg erecta</strain>
    </source>
</reference>
<reference key="2">
    <citation type="journal article" date="2000" name="Nature">
        <title>Sequence and analysis of chromosome 1 of the plant Arabidopsis thaliana.</title>
        <authorList>
            <person name="Theologis A."/>
            <person name="Ecker J.R."/>
            <person name="Palm C.J."/>
            <person name="Federspiel N.A."/>
            <person name="Kaul S."/>
            <person name="White O."/>
            <person name="Alonso J."/>
            <person name="Altafi H."/>
            <person name="Araujo R."/>
            <person name="Bowman C.L."/>
            <person name="Brooks S.Y."/>
            <person name="Buehler E."/>
            <person name="Chan A."/>
            <person name="Chao Q."/>
            <person name="Chen H."/>
            <person name="Cheuk R.F."/>
            <person name="Chin C.W."/>
            <person name="Chung M.K."/>
            <person name="Conn L."/>
            <person name="Conway A.B."/>
            <person name="Conway A.R."/>
            <person name="Creasy T.H."/>
            <person name="Dewar K."/>
            <person name="Dunn P."/>
            <person name="Etgu P."/>
            <person name="Feldblyum T.V."/>
            <person name="Feng J.-D."/>
            <person name="Fong B."/>
            <person name="Fujii C.Y."/>
            <person name="Gill J.E."/>
            <person name="Goldsmith A.D."/>
            <person name="Haas B."/>
            <person name="Hansen N.F."/>
            <person name="Hughes B."/>
            <person name="Huizar L."/>
            <person name="Hunter J.L."/>
            <person name="Jenkins J."/>
            <person name="Johnson-Hopson C."/>
            <person name="Khan S."/>
            <person name="Khaykin E."/>
            <person name="Kim C.J."/>
            <person name="Koo H.L."/>
            <person name="Kremenetskaia I."/>
            <person name="Kurtz D.B."/>
            <person name="Kwan A."/>
            <person name="Lam B."/>
            <person name="Langin-Hooper S."/>
            <person name="Lee A."/>
            <person name="Lee J.M."/>
            <person name="Lenz C.A."/>
            <person name="Li J.H."/>
            <person name="Li Y.-P."/>
            <person name="Lin X."/>
            <person name="Liu S.X."/>
            <person name="Liu Z.A."/>
            <person name="Luros J.S."/>
            <person name="Maiti R."/>
            <person name="Marziali A."/>
            <person name="Militscher J."/>
            <person name="Miranda M."/>
            <person name="Nguyen M."/>
            <person name="Nierman W.C."/>
            <person name="Osborne B.I."/>
            <person name="Pai G."/>
            <person name="Peterson J."/>
            <person name="Pham P.K."/>
            <person name="Rizzo M."/>
            <person name="Rooney T."/>
            <person name="Rowley D."/>
            <person name="Sakano H."/>
            <person name="Salzberg S.L."/>
            <person name="Schwartz J.R."/>
            <person name="Shinn P."/>
            <person name="Southwick A.M."/>
            <person name="Sun H."/>
            <person name="Tallon L.J."/>
            <person name="Tambunga G."/>
            <person name="Toriumi M.J."/>
            <person name="Town C.D."/>
            <person name="Utterback T."/>
            <person name="Van Aken S."/>
            <person name="Vaysberg M."/>
            <person name="Vysotskaia V.S."/>
            <person name="Walker M."/>
            <person name="Wu D."/>
            <person name="Yu G."/>
            <person name="Fraser C.M."/>
            <person name="Venter J.C."/>
            <person name="Davis R.W."/>
        </authorList>
    </citation>
    <scope>NUCLEOTIDE SEQUENCE [LARGE SCALE GENOMIC DNA]</scope>
    <source>
        <strain>cv. Columbia</strain>
    </source>
</reference>
<reference key="3">
    <citation type="journal article" date="2017" name="Plant J.">
        <title>Araport11: a complete reannotation of the Arabidopsis thaliana reference genome.</title>
        <authorList>
            <person name="Cheng C.Y."/>
            <person name="Krishnakumar V."/>
            <person name="Chan A.P."/>
            <person name="Thibaud-Nissen F."/>
            <person name="Schobel S."/>
            <person name="Town C.D."/>
        </authorList>
    </citation>
    <scope>GENOME REANNOTATION</scope>
    <source>
        <strain>cv. Columbia</strain>
    </source>
</reference>
<reference key="4">
    <citation type="submission" date="2006-07" db="EMBL/GenBank/DDBJ databases">
        <title>Large-scale analysis of RIKEN Arabidopsis full-length (RAFL) cDNAs.</title>
        <authorList>
            <person name="Totoki Y."/>
            <person name="Seki M."/>
            <person name="Ishida J."/>
            <person name="Nakajima M."/>
            <person name="Enju A."/>
            <person name="Kamiya A."/>
            <person name="Narusaka M."/>
            <person name="Shin-i T."/>
            <person name="Nakagawa M."/>
            <person name="Sakamoto N."/>
            <person name="Oishi K."/>
            <person name="Kohara Y."/>
            <person name="Kobayashi M."/>
            <person name="Toyoda A."/>
            <person name="Sakaki Y."/>
            <person name="Sakurai T."/>
            <person name="Iida K."/>
            <person name="Akiyama K."/>
            <person name="Satou M."/>
            <person name="Toyoda T."/>
            <person name="Konagaya A."/>
            <person name="Carninci P."/>
            <person name="Kawai J."/>
            <person name="Hayashizaki Y."/>
            <person name="Shinozaki K."/>
        </authorList>
    </citation>
    <scope>NUCLEOTIDE SEQUENCE [LARGE SCALE MRNA] OF 620-1081</scope>
    <source>
        <strain>cv. Columbia</strain>
    </source>
</reference>
<reference key="5">
    <citation type="journal article" date="2010" name="Biochem. Soc. Trans.">
        <title>Inter-cell-layer signalling during Arabidopsis ovule development mediated by the receptor-like kinase STRUBBELIG.</title>
        <authorList>
            <person name="Fulton L."/>
            <person name="Vaddepalli P."/>
            <person name="Yadav R.K."/>
            <person name="Batoux M."/>
            <person name="Schneitz K."/>
        </authorList>
    </citation>
    <scope>REVIEW</scope>
</reference>
<reference key="6">
    <citation type="journal article" date="2013" name="Development">
        <title>QUIRKY interacts with STRUBBELIG and PAL OF QUIRKY to regulate cell growth anisotropy during Arabidopsis gynoecium development.</title>
        <authorList>
            <person name="Trehin C."/>
            <person name="Schrempp S."/>
            <person name="Chauvet A."/>
            <person name="Berne-Dedieu A."/>
            <person name="Thierry A.-M."/>
            <person name="Faure J.-E."/>
            <person name="Negrutiu I."/>
            <person name="Morel P."/>
        </authorList>
    </citation>
    <scope>FUNCTION</scope>
    <scope>DISRUPTION PHENOTYPE</scope>
    <scope>INTERACTION WITH SUB/SCM AND POQ</scope>
    <scope>SUBCELLULAR LOCATION</scope>
    <scope>TISSUE SPECIFICITY</scope>
    <scope>DEVELOPMENTAL STAGE</scope>
    <source>
        <strain>cv. C24</strain>
        <strain>cv. Columbia</strain>
    </source>
</reference>
<reference key="7">
    <citation type="journal article" date="2014" name="Development">
        <title>The C2-domain protein QUIRKY and the receptor-like kinase STRUBBELIG localize to plasmodesmata and mediate tissue morphogenesis in Arabidopsis thaliana.</title>
        <authorList>
            <person name="Vaddepalli P."/>
            <person name="Herrmann A."/>
            <person name="Fulton L."/>
            <person name="Oelschner M."/>
            <person name="Hillmer S."/>
            <person name="Stratil T.F."/>
            <person name="Fastner A."/>
            <person name="Hammes U.Z."/>
            <person name="Ott T."/>
            <person name="Robinson D.G."/>
            <person name="Schneitz K."/>
        </authorList>
    </citation>
    <scope>FUNCTION</scope>
    <scope>SUBCELLULAR LOCATION</scope>
    <scope>INTERACTION WITH SUB/SCM</scope>
    <scope>DEVELOPMENTAL STAGE</scope>
    <source>
        <strain>cv. Columbia</strain>
        <strain>cv. Landsberg erecta</strain>
    </source>
</reference>
<reference key="8">
    <citation type="journal article" date="2018" name="Plant Physiol.">
        <title>Characterization of multiple C2 domain and transmembrane region proteins in Arabidopsis.</title>
        <authorList>
            <person name="Liu L."/>
            <person name="Li C."/>
            <person name="Liang Z."/>
            <person name="Yu H."/>
        </authorList>
    </citation>
    <scope>TISSUE SPECIFICITY</scope>
    <scope>DEVELOPMENTAL STAGE</scope>
    <scope>SUBCELLULAR LOCATION</scope>
    <scope>GENE FAMILY</scope>
    <scope>NOMENCLATURE</scope>
    <source>
        <strain>cv. Columbia</strain>
    </source>
</reference>
<protein>
    <recommendedName>
        <fullName evidence="9">Protein QUIRKY</fullName>
    </recommendedName>
    <alternativeName>
        <fullName evidence="11">Multiple C2 domain and transmembrane region protein 15</fullName>
    </alternativeName>
</protein>
<sequence>MNTTPFHSDPPPSRIQRKLVVEVVEARNILPKDGQGSSSAYVVVDFDAQKKRTSTKFRDLNPIWNEMLDFAVSDPKNMDYDELDIEVYNDKRFGNGGGRKNHFLGRVKIYGSQFSRRGEEGLVYFPLEKKSVFSWIRGEIGLKIYYYDEAADEDTAGGGGGQQQQQQQQQFHPPQQEADEQQHQQQFHPPPQQMMNIPPEKPNVVVVEEGRVFESAQSQRYTETHQQPPVVIVEESPPQHVMQGPNDNHPHRNDNHPQRPPSPPPPPSAGEVHYYPPEVRKMQVGRPPGGDRIRVTKRPPNGDYSPRVINSKTGGGETTMEKKTHHPYNLVEPMQYLFVRIVKARGLPPNESAYVKVRTSNHFVRSKPAVNRPGESVDSPEWNQVFALGHNRSDSAVTGATLEISAWDASSESFLGGVCFDLSEVPVRDPPDSPLAPQWYRLEGSGADQNSGRISGDIQLSVWIGTQVDEAFPEAWSSDAPHVAHTRSKVYQSPKLWYLRVTVLEAQDLHIAPNLPPLTAPEIRVKAQLGFQSARTRRGSMNNHSGSFHWHEDMIFVAGEPLEDCLVLMVEDRTTKEATLLGHAMIPVSSIEQRIDERFVPSKWHTLEGEGGGGGGGGGPGGGGGGGPYCGRISLRLCLEGGYHVLEEAAHVCSDFRPTAKQLWKPPIGILELGILGARGLLPMKAKNGGKGSTDAYCVAKYGKKWVRTRTITDSFDPRWHEQYTWQVYDPCTVLTVGVFDNWRMFSDASDDRPDTRIGKIRIRVSTLESNKVYTNSYPLLVLLPSGMKKMGEIEVAVRFACPSLLPDVCAAYGQPLLPRMHYIRPLGVAQQDALRGAATKMVAAWLARAEPPLGPEVVRYMLDADSHAWSMRKSKANWYRIVGVLAWAVGLAKWLDNIRRWRNPVTTVLVHILYLVLVWYPDLVVPTAFLYVVMIGVWYYRFRPKIPAGMDIRLSQAETVDPDELDEEFDTIPSSRRPEVIRARYDRLRILAVRVQTILGDFAAQGERIQALVSWRDPRATKLFIAICLVITIVLYAVPAKMVAVALGFYYLRHPMFRDTMPTASLNFFRRLPSLSDRLI</sequence>
<evidence type="ECO:0000250" key="1">
    <source>
        <dbReference type="UniProtKB" id="Q6DN14"/>
    </source>
</evidence>
<evidence type="ECO:0000255" key="2"/>
<evidence type="ECO:0000255" key="3">
    <source>
        <dbReference type="PROSITE-ProRule" id="PRU00041"/>
    </source>
</evidence>
<evidence type="ECO:0000256" key="4">
    <source>
        <dbReference type="SAM" id="MobiDB-lite"/>
    </source>
</evidence>
<evidence type="ECO:0000269" key="5">
    <source>
    </source>
</evidence>
<evidence type="ECO:0000269" key="6">
    <source>
    </source>
</evidence>
<evidence type="ECO:0000269" key="7">
    <source>
    </source>
</evidence>
<evidence type="ECO:0000269" key="8">
    <source>
    </source>
</evidence>
<evidence type="ECO:0000303" key="9">
    <source>
    </source>
</evidence>
<evidence type="ECO:0000303" key="10">
    <source>
    </source>
</evidence>
<evidence type="ECO:0000303" key="11">
    <source>
    </source>
</evidence>
<evidence type="ECO:0000305" key="12"/>
<evidence type="ECO:0000312" key="13">
    <source>
        <dbReference type="Araport" id="AT1G74720"/>
    </source>
</evidence>
<evidence type="ECO:0000312" key="14">
    <source>
        <dbReference type="EMBL" id="AAD55273.1"/>
    </source>
</evidence>
<evidence type="ECO:0000312" key="15">
    <source>
        <dbReference type="EMBL" id="AAG52366.1"/>
    </source>
</evidence>
<dbReference type="EMBL" id="FJ209045">
    <property type="protein sequence ID" value="ACL14176.1"/>
    <property type="molecule type" value="mRNA"/>
</dbReference>
<dbReference type="EMBL" id="AC008263">
    <property type="protein sequence ID" value="AAD55273.1"/>
    <property type="status" value="ALT_SEQ"/>
    <property type="molecule type" value="Genomic_DNA"/>
</dbReference>
<dbReference type="EMBL" id="AC011765">
    <property type="protein sequence ID" value="AAG52366.1"/>
    <property type="status" value="ALT_SEQ"/>
    <property type="molecule type" value="Genomic_DNA"/>
</dbReference>
<dbReference type="EMBL" id="CP002684">
    <property type="protein sequence ID" value="AEE35626.1"/>
    <property type="molecule type" value="Genomic_DNA"/>
</dbReference>
<dbReference type="EMBL" id="AK230199">
    <property type="protein sequence ID" value="BAF02007.1"/>
    <property type="molecule type" value="mRNA"/>
</dbReference>
<dbReference type="PIR" id="E96776">
    <property type="entry name" value="E96776"/>
</dbReference>
<dbReference type="RefSeq" id="NP_177610.1">
    <property type="nucleotide sequence ID" value="NM_106130.7"/>
</dbReference>
<dbReference type="SMR" id="B8XCH5"/>
<dbReference type="FunCoup" id="B8XCH5">
    <property type="interactions" value="594"/>
</dbReference>
<dbReference type="STRING" id="3702.B8XCH5"/>
<dbReference type="TCDB" id="9.A.57.1.7">
    <property type="family name" value="the extended-synaptotagmin (e-syt) family"/>
</dbReference>
<dbReference type="iPTMnet" id="B8XCH5"/>
<dbReference type="PaxDb" id="3702-AT1G74720.1"/>
<dbReference type="ProteomicsDB" id="225956"/>
<dbReference type="EnsemblPlants" id="AT1G74720.1">
    <property type="protein sequence ID" value="AT1G74720.1"/>
    <property type="gene ID" value="AT1G74720"/>
</dbReference>
<dbReference type="GeneID" id="843811"/>
<dbReference type="Gramene" id="AT1G74720.1">
    <property type="protein sequence ID" value="AT1G74720.1"/>
    <property type="gene ID" value="AT1G74720"/>
</dbReference>
<dbReference type="KEGG" id="ath:AT1G74720"/>
<dbReference type="Araport" id="AT1G74720"/>
<dbReference type="TAIR" id="AT1G74720">
    <property type="gene designation" value="QKY"/>
</dbReference>
<dbReference type="eggNOG" id="ENOG502QUYP">
    <property type="taxonomic scope" value="Eukaryota"/>
</dbReference>
<dbReference type="HOGENOM" id="CLU_003762_1_0_1"/>
<dbReference type="InParanoid" id="B8XCH5"/>
<dbReference type="OMA" id="DIRRWKN"/>
<dbReference type="OrthoDB" id="67700at2759"/>
<dbReference type="PhylomeDB" id="B8XCH5"/>
<dbReference type="PRO" id="PR:B8XCH5"/>
<dbReference type="Proteomes" id="UP000006548">
    <property type="component" value="Chromosome 1"/>
</dbReference>
<dbReference type="ExpressionAtlas" id="B8XCH5">
    <property type="expression patterns" value="baseline and differential"/>
</dbReference>
<dbReference type="GO" id="GO:0005829">
    <property type="term" value="C:cytosol"/>
    <property type="evidence" value="ECO:0000314"/>
    <property type="project" value="TAIR"/>
</dbReference>
<dbReference type="GO" id="GO:0000139">
    <property type="term" value="C:Golgi membrane"/>
    <property type="evidence" value="ECO:0007669"/>
    <property type="project" value="UniProtKB-SubCell"/>
</dbReference>
<dbReference type="GO" id="GO:0005886">
    <property type="term" value="C:plasma membrane"/>
    <property type="evidence" value="ECO:0000314"/>
    <property type="project" value="UniProtKB"/>
</dbReference>
<dbReference type="GO" id="GO:0009506">
    <property type="term" value="C:plasmodesma"/>
    <property type="evidence" value="ECO:0000314"/>
    <property type="project" value="UniProtKB"/>
</dbReference>
<dbReference type="GO" id="GO:0046872">
    <property type="term" value="F:metal ion binding"/>
    <property type="evidence" value="ECO:0007669"/>
    <property type="project" value="UniProtKB-KW"/>
</dbReference>
<dbReference type="GO" id="GO:0051211">
    <property type="term" value="P:anisotropic cell growth"/>
    <property type="evidence" value="ECO:0000315"/>
    <property type="project" value="UniProtKB"/>
</dbReference>
<dbReference type="GO" id="GO:0048467">
    <property type="term" value="P:gynoecium development"/>
    <property type="evidence" value="ECO:0000315"/>
    <property type="project" value="UniProtKB"/>
</dbReference>
<dbReference type="GO" id="GO:0099402">
    <property type="term" value="P:plant organ development"/>
    <property type="evidence" value="ECO:0000315"/>
    <property type="project" value="TAIR"/>
</dbReference>
<dbReference type="GO" id="GO:0010497">
    <property type="term" value="P:plasmodesmata-mediated intercellular transport"/>
    <property type="evidence" value="ECO:0000315"/>
    <property type="project" value="UniProtKB"/>
</dbReference>
<dbReference type="GO" id="GO:0009911">
    <property type="term" value="P:positive regulation of flower development"/>
    <property type="evidence" value="ECO:0000315"/>
    <property type="project" value="TAIR"/>
</dbReference>
<dbReference type="GO" id="GO:0048729">
    <property type="term" value="P:tissue morphogenesis"/>
    <property type="evidence" value="ECO:0000315"/>
    <property type="project" value="UniProtKB"/>
</dbReference>
<dbReference type="CDD" id="cd04022">
    <property type="entry name" value="C2A_MCTP_PRT_plant"/>
    <property type="match status" value="1"/>
</dbReference>
<dbReference type="CDD" id="cd08378">
    <property type="entry name" value="C2B_MCTP_PRT_plant"/>
    <property type="match status" value="1"/>
</dbReference>
<dbReference type="CDD" id="cd04019">
    <property type="entry name" value="C2C_MCTP_PRT_plant"/>
    <property type="match status" value="1"/>
</dbReference>
<dbReference type="CDD" id="cd08379">
    <property type="entry name" value="C2D_MCTP_PRT_plant"/>
    <property type="match status" value="1"/>
</dbReference>
<dbReference type="FunFam" id="2.60.40.150:FF:000090">
    <property type="entry name" value="C2 domain-containing protein"/>
    <property type="match status" value="1"/>
</dbReference>
<dbReference type="FunFam" id="2.60.40.150:FF:000285">
    <property type="entry name" value="C2 domain-containing protein"/>
    <property type="match status" value="1"/>
</dbReference>
<dbReference type="FunFam" id="2.60.40.150:FF:000300">
    <property type="entry name" value="C2 domain-containing protein"/>
    <property type="match status" value="1"/>
</dbReference>
<dbReference type="Gene3D" id="2.60.40.150">
    <property type="entry name" value="C2 domain"/>
    <property type="match status" value="4"/>
</dbReference>
<dbReference type="InterPro" id="IPR000008">
    <property type="entry name" value="C2_dom"/>
</dbReference>
<dbReference type="InterPro" id="IPR035892">
    <property type="entry name" value="C2_domain_sf"/>
</dbReference>
<dbReference type="InterPro" id="IPR047257">
    <property type="entry name" value="C2B_MCTP_PRT_plant"/>
</dbReference>
<dbReference type="InterPro" id="IPR047258">
    <property type="entry name" value="C2C_MCTP_PRT_plant"/>
</dbReference>
<dbReference type="InterPro" id="IPR047255">
    <property type="entry name" value="C2D_MCTP_PRT_plant"/>
</dbReference>
<dbReference type="InterPro" id="IPR013583">
    <property type="entry name" value="MCTP_C"/>
</dbReference>
<dbReference type="InterPro" id="IPR047259">
    <property type="entry name" value="QUIRKY-like"/>
</dbReference>
<dbReference type="PANTHER" id="PTHR31425">
    <property type="entry name" value="PHOSPHORIBOSYLANTHRANILATE TRANSFERASE ISOFORM 1"/>
    <property type="match status" value="1"/>
</dbReference>
<dbReference type="PANTHER" id="PTHR31425:SF36">
    <property type="entry name" value="PROTEIN QUIRKY"/>
    <property type="match status" value="1"/>
</dbReference>
<dbReference type="Pfam" id="PF00168">
    <property type="entry name" value="C2"/>
    <property type="match status" value="4"/>
</dbReference>
<dbReference type="Pfam" id="PF08372">
    <property type="entry name" value="PRT_C"/>
    <property type="match status" value="1"/>
</dbReference>
<dbReference type="SMART" id="SM00239">
    <property type="entry name" value="C2"/>
    <property type="match status" value="4"/>
</dbReference>
<dbReference type="SUPFAM" id="SSF49562">
    <property type="entry name" value="C2 domain (Calcium/lipid-binding domain, CaLB)"/>
    <property type="match status" value="4"/>
</dbReference>
<dbReference type="PROSITE" id="PS50004">
    <property type="entry name" value="C2"/>
    <property type="match status" value="4"/>
</dbReference>